<name>SPED_HAHCH</name>
<proteinExistence type="inferred from homology"/>
<organism>
    <name type="scientific">Hahella chejuensis (strain KCTC 2396)</name>
    <dbReference type="NCBI Taxonomy" id="349521"/>
    <lineage>
        <taxon>Bacteria</taxon>
        <taxon>Pseudomonadati</taxon>
        <taxon>Pseudomonadota</taxon>
        <taxon>Gammaproteobacteria</taxon>
        <taxon>Oceanospirillales</taxon>
        <taxon>Hahellaceae</taxon>
        <taxon>Hahella</taxon>
    </lineage>
</organism>
<evidence type="ECO:0000255" key="1">
    <source>
        <dbReference type="HAMAP-Rule" id="MF_00465"/>
    </source>
</evidence>
<keyword id="KW-0068">Autocatalytic cleavage</keyword>
<keyword id="KW-0210">Decarboxylase</keyword>
<keyword id="KW-0456">Lyase</keyword>
<keyword id="KW-0620">Polyamine biosynthesis</keyword>
<keyword id="KW-0670">Pyruvate</keyword>
<keyword id="KW-1185">Reference proteome</keyword>
<keyword id="KW-0949">S-adenosyl-L-methionine</keyword>
<keyword id="KW-0704">Schiff base</keyword>
<keyword id="KW-0745">Spermidine biosynthesis</keyword>
<keyword id="KW-0865">Zymogen</keyword>
<sequence length="264" mass="30181">MSEKLKLHGFNNLTKSLSFNIYDICYAQSEKHRQEYIAYIDEQYNAERLTQILTDVVEIIGAHILNVSRQDYDPHGASVTMLIAEHEVPPPADSSEESPGPLPDAVVAHLDKSHVTVHTYPESHPDNGISTFRADIDVSTCGLISPLKALNYLIHSFDSDIVTIDYRVRGFTRDIDGAKLYIDHDINSIQNFLSEDTQEAYQMIDVNVYQENLFHTKMILKEFNLDNYLFGTGVSELNANEASNIRERLQKEMLEIFYSRNMPY</sequence>
<reference key="1">
    <citation type="journal article" date="2005" name="Nucleic Acids Res.">
        <title>Genomic blueprint of Hahella chejuensis, a marine microbe producing an algicidal agent.</title>
        <authorList>
            <person name="Jeong H."/>
            <person name="Yim J.H."/>
            <person name="Lee C."/>
            <person name="Choi S.-H."/>
            <person name="Park Y.K."/>
            <person name="Yoon S.H."/>
            <person name="Hur C.-G."/>
            <person name="Kang H.-Y."/>
            <person name="Kim D."/>
            <person name="Lee H.H."/>
            <person name="Park K.H."/>
            <person name="Park S.-H."/>
            <person name="Park H.-S."/>
            <person name="Lee H.K."/>
            <person name="Oh T.K."/>
            <person name="Kim J.F."/>
        </authorList>
    </citation>
    <scope>NUCLEOTIDE SEQUENCE [LARGE SCALE GENOMIC DNA]</scope>
    <source>
        <strain>KCTC 2396</strain>
    </source>
</reference>
<gene>
    <name evidence="1" type="primary">speD</name>
    <name type="ordered locus">HCH_06136</name>
</gene>
<dbReference type="EC" id="4.1.1.50" evidence="1"/>
<dbReference type="EMBL" id="CP000155">
    <property type="protein sequence ID" value="ABC32784.1"/>
    <property type="molecule type" value="Genomic_DNA"/>
</dbReference>
<dbReference type="RefSeq" id="WP_011399842.1">
    <property type="nucleotide sequence ID" value="NC_007645.1"/>
</dbReference>
<dbReference type="SMR" id="Q2S990"/>
<dbReference type="STRING" id="349521.HCH_06136"/>
<dbReference type="KEGG" id="hch:HCH_06136"/>
<dbReference type="eggNOG" id="COG1586">
    <property type="taxonomic scope" value="Bacteria"/>
</dbReference>
<dbReference type="HOGENOM" id="CLU_092007_0_0_6"/>
<dbReference type="OrthoDB" id="5290709at2"/>
<dbReference type="UniPathway" id="UPA00331">
    <property type="reaction ID" value="UER00451"/>
</dbReference>
<dbReference type="Proteomes" id="UP000000238">
    <property type="component" value="Chromosome"/>
</dbReference>
<dbReference type="GO" id="GO:0005829">
    <property type="term" value="C:cytosol"/>
    <property type="evidence" value="ECO:0007669"/>
    <property type="project" value="TreeGrafter"/>
</dbReference>
<dbReference type="GO" id="GO:0004014">
    <property type="term" value="F:adenosylmethionine decarboxylase activity"/>
    <property type="evidence" value="ECO:0007669"/>
    <property type="project" value="UniProtKB-UniRule"/>
</dbReference>
<dbReference type="GO" id="GO:0008295">
    <property type="term" value="P:spermidine biosynthetic process"/>
    <property type="evidence" value="ECO:0007669"/>
    <property type="project" value="UniProtKB-UniRule"/>
</dbReference>
<dbReference type="Gene3D" id="3.60.90.10">
    <property type="entry name" value="S-adenosylmethionine decarboxylase"/>
    <property type="match status" value="1"/>
</dbReference>
<dbReference type="HAMAP" id="MF_00465">
    <property type="entry name" value="AdoMetDC_2"/>
    <property type="match status" value="1"/>
</dbReference>
<dbReference type="InterPro" id="IPR003826">
    <property type="entry name" value="AdoMetDC_fam_prok"/>
</dbReference>
<dbReference type="InterPro" id="IPR009165">
    <property type="entry name" value="S-AdoMet_deCO2ase_bac"/>
</dbReference>
<dbReference type="InterPro" id="IPR016067">
    <property type="entry name" value="S-AdoMet_deCO2ase_core"/>
</dbReference>
<dbReference type="NCBIfam" id="TIGR03331">
    <property type="entry name" value="SAM_DCase_Eco"/>
    <property type="match status" value="1"/>
</dbReference>
<dbReference type="PANTHER" id="PTHR33866">
    <property type="entry name" value="S-ADENOSYLMETHIONINE DECARBOXYLASE PROENZYME"/>
    <property type="match status" value="1"/>
</dbReference>
<dbReference type="PANTHER" id="PTHR33866:SF1">
    <property type="entry name" value="S-ADENOSYLMETHIONINE DECARBOXYLASE PROENZYME"/>
    <property type="match status" value="1"/>
</dbReference>
<dbReference type="Pfam" id="PF02675">
    <property type="entry name" value="AdoMet_dc"/>
    <property type="match status" value="1"/>
</dbReference>
<dbReference type="PIRSF" id="PIRSF001356">
    <property type="entry name" value="SAM_decarboxylas"/>
    <property type="match status" value="1"/>
</dbReference>
<dbReference type="SUPFAM" id="SSF56276">
    <property type="entry name" value="S-adenosylmethionine decarboxylase"/>
    <property type="match status" value="1"/>
</dbReference>
<comment type="function">
    <text evidence="1">Catalyzes the decarboxylation of S-adenosylmethionine to S-adenosylmethioninamine (dcAdoMet), the propylamine donor required for the synthesis of the polyamines spermine and spermidine from the diamine putrescine.</text>
</comment>
<comment type="catalytic activity">
    <reaction evidence="1">
        <text>S-adenosyl-L-methionine + H(+) = S-adenosyl 3-(methylsulfanyl)propylamine + CO2</text>
        <dbReference type="Rhea" id="RHEA:15981"/>
        <dbReference type="ChEBI" id="CHEBI:15378"/>
        <dbReference type="ChEBI" id="CHEBI:16526"/>
        <dbReference type="ChEBI" id="CHEBI:57443"/>
        <dbReference type="ChEBI" id="CHEBI:59789"/>
        <dbReference type="EC" id="4.1.1.50"/>
    </reaction>
</comment>
<comment type="cofactor">
    <cofactor evidence="1">
        <name>pyruvate</name>
        <dbReference type="ChEBI" id="CHEBI:15361"/>
    </cofactor>
    <text evidence="1">Binds 1 pyruvoyl group covalently per subunit.</text>
</comment>
<comment type="pathway">
    <text evidence="1">Amine and polyamine biosynthesis; S-adenosylmethioninamine biosynthesis; S-adenosylmethioninamine from S-adenosyl-L-methionine: step 1/1.</text>
</comment>
<comment type="subunit">
    <text evidence="1">Heterooctamer of four alpha and four beta chains arranged as a tetramer of alpha/beta heterodimers.</text>
</comment>
<comment type="PTM">
    <text evidence="1">Is synthesized initially as an inactive proenzyme. Formation of the active enzyme involves a self-maturation process in which the active site pyruvoyl group is generated from an internal serine residue via an autocatalytic post-translational modification. Two non-identical subunits are generated from the proenzyme in this reaction, and the pyruvate is formed at the N-terminus of the alpha chain, which is derived from the carboxyl end of the proenzyme. The post-translation cleavage follows an unusual pathway, termed non-hydrolytic serinolysis, in which the side chain hydroxyl group of the serine supplies its oxygen atom to form the C-terminus of the beta chain, while the remainder of the serine residue undergoes an oxidative deamination to produce ammonia and the pyruvoyl group blocking the N-terminus of the alpha chain.</text>
</comment>
<comment type="similarity">
    <text evidence="1">Belongs to the prokaryotic AdoMetDC family. Type 2 subfamily.</text>
</comment>
<protein>
    <recommendedName>
        <fullName evidence="1">S-adenosylmethionine decarboxylase proenzyme</fullName>
        <shortName evidence="1">AdoMetDC</shortName>
        <shortName evidence="1">SAMDC</shortName>
        <ecNumber evidence="1">4.1.1.50</ecNumber>
    </recommendedName>
    <component>
        <recommendedName>
            <fullName evidence="1">S-adenosylmethionine decarboxylase beta chain</fullName>
        </recommendedName>
    </component>
    <component>
        <recommendedName>
            <fullName evidence="1">S-adenosylmethionine decarboxylase alpha chain</fullName>
        </recommendedName>
    </component>
</protein>
<accession>Q2S990</accession>
<feature type="chain" id="PRO_0000273597" description="S-adenosylmethionine decarboxylase beta chain" evidence="1">
    <location>
        <begin position="1"/>
        <end position="112"/>
    </location>
</feature>
<feature type="chain" id="PRO_0000273598" description="S-adenosylmethionine decarboxylase alpha chain" evidence="1">
    <location>
        <begin position="113"/>
        <end position="264"/>
    </location>
</feature>
<feature type="active site" description="Schiff-base intermediate with substrate; via pyruvic acid" evidence="1">
    <location>
        <position position="113"/>
    </location>
</feature>
<feature type="active site" description="Proton acceptor; for processing activity" evidence="1">
    <location>
        <position position="118"/>
    </location>
</feature>
<feature type="active site" description="Proton donor; for catalytic activity" evidence="1">
    <location>
        <position position="141"/>
    </location>
</feature>
<feature type="site" description="Cleavage (non-hydrolytic); by autolysis" evidence="1">
    <location>
        <begin position="112"/>
        <end position="113"/>
    </location>
</feature>
<feature type="modified residue" description="Pyruvic acid (Ser); by autocatalysis" evidence="1">
    <location>
        <position position="113"/>
    </location>
</feature>